<accession>B4LMR9</accession>
<keyword id="KW-1003">Cell membrane</keyword>
<keyword id="KW-0966">Cell projection</keyword>
<keyword id="KW-0963">Cytoplasm</keyword>
<keyword id="KW-0472">Membrane</keyword>
<keyword id="KW-0539">Nucleus</keyword>
<keyword id="KW-0597">Phosphoprotein</keyword>
<keyword id="KW-1185">Reference proteome</keyword>
<feature type="chain" id="PRO_0000400844" description="Protein king tubby">
    <location>
        <begin position="1"/>
        <end position="455"/>
    </location>
</feature>
<feature type="region of interest" description="Disordered" evidence="3">
    <location>
        <begin position="35"/>
        <end position="92"/>
    </location>
</feature>
<feature type="compositionally biased region" description="Low complexity" evidence="3">
    <location>
        <begin position="67"/>
        <end position="92"/>
    </location>
</feature>
<feature type="modified residue" description="Phosphoserine" evidence="1">
    <location>
        <position position="144"/>
    </location>
</feature>
<reference evidence="4" key="1">
    <citation type="journal article" date="2007" name="Nature">
        <title>Evolution of genes and genomes on the Drosophila phylogeny.</title>
        <authorList>
            <consortium name="Drosophila 12 genomes consortium"/>
        </authorList>
    </citation>
    <scope>NUCLEOTIDE SEQUENCE [LARGE SCALE GENOMIC DNA]</scope>
    <source>
        <strain evidence="4">Tucson 15010-1051.87</strain>
    </source>
</reference>
<evidence type="ECO:0000250" key="1">
    <source>
        <dbReference type="UniProtKB" id="Q86PC9"/>
    </source>
</evidence>
<evidence type="ECO:0000255" key="2"/>
<evidence type="ECO:0000256" key="3">
    <source>
        <dbReference type="SAM" id="MobiDB-lite"/>
    </source>
</evidence>
<evidence type="ECO:0000312" key="4">
    <source>
        <dbReference type="EMBL" id="EDW61010.1"/>
    </source>
</evidence>
<gene>
    <name evidence="1" type="primary">king-tubby</name>
    <name type="ORF">GJ20537</name>
</gene>
<comment type="subcellular location">
    <subcellularLocation>
        <location evidence="1">Cytoplasm</location>
    </subcellularLocation>
    <subcellularLocation>
        <location evidence="1">Nucleus</location>
    </subcellularLocation>
    <subcellularLocation>
        <location evidence="1">Cell projection</location>
        <location evidence="1">Cilium membrane</location>
        <topology evidence="1">Peripheral membrane protein</topology>
    </subcellularLocation>
    <subcellularLocation>
        <location evidence="1">Cell projection</location>
        <location evidence="1">Rhabdomere</location>
    </subcellularLocation>
</comment>
<comment type="similarity">
    <text evidence="2">Belongs to the TUB family.</text>
</comment>
<organism>
    <name type="scientific">Drosophila virilis</name>
    <name type="common">Fruit fly</name>
    <dbReference type="NCBI Taxonomy" id="7244"/>
    <lineage>
        <taxon>Eukaryota</taxon>
        <taxon>Metazoa</taxon>
        <taxon>Ecdysozoa</taxon>
        <taxon>Arthropoda</taxon>
        <taxon>Hexapoda</taxon>
        <taxon>Insecta</taxon>
        <taxon>Pterygota</taxon>
        <taxon>Neoptera</taxon>
        <taxon>Endopterygota</taxon>
        <taxon>Diptera</taxon>
        <taxon>Brachycera</taxon>
        <taxon>Muscomorpha</taxon>
        <taxon>Ephydroidea</taxon>
        <taxon>Drosophilidae</taxon>
        <taxon>Drosophila</taxon>
    </lineage>
</organism>
<name>TULP_DROVI</name>
<proteinExistence type="inferred from homology"/>
<protein>
    <recommendedName>
        <fullName evidence="1">Protein king tubby</fullName>
    </recommendedName>
</protein>
<dbReference type="EMBL" id="CH940648">
    <property type="protein sequence ID" value="EDW61010.1"/>
    <property type="molecule type" value="Genomic_DNA"/>
</dbReference>
<dbReference type="RefSeq" id="XP_015029360.1">
    <property type="nucleotide sequence ID" value="XM_015173874.1"/>
</dbReference>
<dbReference type="SMR" id="B4LMR9"/>
<dbReference type="FunCoup" id="B4LMR9">
    <property type="interactions" value="198"/>
</dbReference>
<dbReference type="STRING" id="7244.B4LMR9"/>
<dbReference type="GeneID" id="6625691"/>
<dbReference type="KEGG" id="dvi:6625691"/>
<dbReference type="CTD" id="37400"/>
<dbReference type="eggNOG" id="KOG2502">
    <property type="taxonomic scope" value="Eukaryota"/>
</dbReference>
<dbReference type="HOGENOM" id="CLU_028236_1_1_1"/>
<dbReference type="InParanoid" id="B4LMR9"/>
<dbReference type="OMA" id="GYDGPMQ"/>
<dbReference type="OrthoDB" id="8775810at2759"/>
<dbReference type="PhylomeDB" id="B4LMR9"/>
<dbReference type="ChiTaRS" id="ktub">
    <property type="organism name" value="fly"/>
</dbReference>
<dbReference type="Proteomes" id="UP000008792">
    <property type="component" value="Unassembled WGS sequence"/>
</dbReference>
<dbReference type="GO" id="GO:0060170">
    <property type="term" value="C:ciliary membrane"/>
    <property type="evidence" value="ECO:0007669"/>
    <property type="project" value="UniProtKB-SubCell"/>
</dbReference>
<dbReference type="GO" id="GO:0005737">
    <property type="term" value="C:cytoplasm"/>
    <property type="evidence" value="ECO:0000250"/>
    <property type="project" value="UniProtKB"/>
</dbReference>
<dbReference type="GO" id="GO:0005634">
    <property type="term" value="C:nucleus"/>
    <property type="evidence" value="ECO:0000250"/>
    <property type="project" value="UniProtKB"/>
</dbReference>
<dbReference type="GO" id="GO:0016028">
    <property type="term" value="C:rhabdomere"/>
    <property type="evidence" value="ECO:0007669"/>
    <property type="project" value="UniProtKB-SubCell"/>
</dbReference>
<dbReference type="GO" id="GO:0061512">
    <property type="term" value="P:protein localization to cilium"/>
    <property type="evidence" value="ECO:0007669"/>
    <property type="project" value="TreeGrafter"/>
</dbReference>
<dbReference type="FunFam" id="3.20.90.10:FF:000001">
    <property type="entry name" value="Tubby-like protein"/>
    <property type="match status" value="1"/>
</dbReference>
<dbReference type="Gene3D" id="3.20.90.10">
    <property type="entry name" value="Tubby Protein, Chain A"/>
    <property type="match status" value="1"/>
</dbReference>
<dbReference type="InterPro" id="IPR025659">
    <property type="entry name" value="Tubby-like_C"/>
</dbReference>
<dbReference type="InterPro" id="IPR000007">
    <property type="entry name" value="Tubby_C"/>
</dbReference>
<dbReference type="InterPro" id="IPR018066">
    <property type="entry name" value="Tubby_C_CS"/>
</dbReference>
<dbReference type="PANTHER" id="PTHR16517:SF7">
    <property type="entry name" value="PROTEIN KING TUBBY"/>
    <property type="match status" value="1"/>
</dbReference>
<dbReference type="PANTHER" id="PTHR16517">
    <property type="entry name" value="TUBBY-RELATED"/>
    <property type="match status" value="1"/>
</dbReference>
<dbReference type="Pfam" id="PF01167">
    <property type="entry name" value="Tub"/>
    <property type="match status" value="1"/>
</dbReference>
<dbReference type="PRINTS" id="PR01573">
    <property type="entry name" value="SUPERTUBBY"/>
</dbReference>
<dbReference type="SUPFAM" id="SSF54518">
    <property type="entry name" value="Tubby C-terminal domain-like"/>
    <property type="match status" value="1"/>
</dbReference>
<dbReference type="PROSITE" id="PS01200">
    <property type="entry name" value="TUB_1"/>
    <property type="match status" value="1"/>
</dbReference>
<dbReference type="PROSITE" id="PS01201">
    <property type="entry name" value="TUB_2"/>
    <property type="match status" value="1"/>
</dbReference>
<sequence>MHPQLHKCRQLMDAYIRQKRASPGMVQASDLQMSRPMSGMRGNSRELHAYDGPMQFIGSPHNPDQILSNNSSSVHLSSSMNSSRNNSNNLRSLSTINQEDLIEEISSHELEDEESSPVTVVENPLPPLSANSAHSQRLRNGQQSFNETLDEDDYANRNIAGVAPVRPAGIASPYKDGVAPEASNGVANGSNSGVGSAESEGDVIGSIDLFVMQPAPQGVLYKCRITRDRKGMDRGLFPIYYLHLERDYGKKIFLLGGRKRKKSKTSNYIVSCDPTDLSRNADGFCGKLRSNVFGTSFTVFDSGNKDSTESPRLDLAVIIYDTNILGFKGPRNMTVILPGMTEDDQRVKISSADPKQQGILDLWKMKNMDNIVELHNKTPVWNDETQSYVLNFHGRVTQASVKNFQLVHDSDPEYIVMQFGRTSEDVFTMDYRYPLCAMQAFAIALSSFDGKIACE</sequence>